<keyword id="KW-0315">Glutamine amidotransferase</keyword>
<keyword id="KW-0378">Hydrolase</keyword>
<keyword id="KW-0456">Lyase</keyword>
<keyword id="KW-0663">Pyridoxal phosphate</keyword>
<keyword id="KW-1185">Reference proteome</keyword>
<comment type="function">
    <text evidence="1">Catalyzes the hydrolysis of glutamine to glutamate and ammonia as part of the biosynthesis of pyridoxal 5'-phosphate. The resulting ammonia molecule is channeled to the active site of PdxS.</text>
</comment>
<comment type="catalytic activity">
    <reaction evidence="1">
        <text>aldehydo-D-ribose 5-phosphate + D-glyceraldehyde 3-phosphate + L-glutamine = pyridoxal 5'-phosphate + L-glutamate + phosphate + 3 H2O + H(+)</text>
        <dbReference type="Rhea" id="RHEA:31507"/>
        <dbReference type="ChEBI" id="CHEBI:15377"/>
        <dbReference type="ChEBI" id="CHEBI:15378"/>
        <dbReference type="ChEBI" id="CHEBI:29985"/>
        <dbReference type="ChEBI" id="CHEBI:43474"/>
        <dbReference type="ChEBI" id="CHEBI:58273"/>
        <dbReference type="ChEBI" id="CHEBI:58359"/>
        <dbReference type="ChEBI" id="CHEBI:59776"/>
        <dbReference type="ChEBI" id="CHEBI:597326"/>
        <dbReference type="EC" id="4.3.3.6"/>
    </reaction>
</comment>
<comment type="catalytic activity">
    <reaction evidence="1">
        <text>L-glutamine + H2O = L-glutamate + NH4(+)</text>
        <dbReference type="Rhea" id="RHEA:15889"/>
        <dbReference type="ChEBI" id="CHEBI:15377"/>
        <dbReference type="ChEBI" id="CHEBI:28938"/>
        <dbReference type="ChEBI" id="CHEBI:29985"/>
        <dbReference type="ChEBI" id="CHEBI:58359"/>
        <dbReference type="EC" id="3.5.1.2"/>
    </reaction>
</comment>
<comment type="pathway">
    <text evidence="1">Cofactor biosynthesis; pyridoxal 5'-phosphate biosynthesis.</text>
</comment>
<comment type="subunit">
    <text evidence="1">In the presence of PdxS, forms a dodecamer of heterodimers. Only shows activity in the heterodimer.</text>
</comment>
<comment type="similarity">
    <text evidence="1">Belongs to the glutaminase PdxT/SNO family.</text>
</comment>
<feature type="chain" id="PRO_0000255832" description="Pyridoxal 5'-phosphate synthase subunit PdxT">
    <location>
        <begin position="1"/>
        <end position="199"/>
    </location>
</feature>
<feature type="active site" description="Nucleophile" evidence="1">
    <location>
        <position position="81"/>
    </location>
</feature>
<feature type="active site" description="Charge relay system" evidence="1">
    <location>
        <position position="175"/>
    </location>
</feature>
<feature type="active site" description="Charge relay system" evidence="1">
    <location>
        <position position="177"/>
    </location>
</feature>
<feature type="binding site" evidence="1">
    <location>
        <begin position="49"/>
        <end position="51"/>
    </location>
    <ligand>
        <name>L-glutamine</name>
        <dbReference type="ChEBI" id="CHEBI:58359"/>
    </ligand>
</feature>
<feature type="binding site" evidence="1">
    <location>
        <position position="110"/>
    </location>
    <ligand>
        <name>L-glutamine</name>
        <dbReference type="ChEBI" id="CHEBI:58359"/>
    </ligand>
</feature>
<feature type="binding site" evidence="1">
    <location>
        <begin position="139"/>
        <end position="140"/>
    </location>
    <ligand>
        <name>L-glutamine</name>
        <dbReference type="ChEBI" id="CHEBI:58359"/>
    </ligand>
</feature>
<name>PDXT_FRACC</name>
<sequence length="199" mass="20870">MSGPRIGILALQGDVREHARALTEAGARPVAVRHAVELAEVDGLVLPGGESTTIGRLLRVFELLEPLRAAVAAGLPVFGSCAGMILLARDVVGGRPDQPLIGGLDIVVRRNAFGRQVDSFEAHLEVVGVAGPPVHAVFIRAPWVEKAGDAVEVLARVAEAPVTVRQGPLLATAFHPELTGDARVHRLFVDSVRSSGSGR</sequence>
<evidence type="ECO:0000255" key="1">
    <source>
        <dbReference type="HAMAP-Rule" id="MF_01615"/>
    </source>
</evidence>
<organism>
    <name type="scientific">Frankia casuarinae (strain DSM 45818 / CECT 9043 / HFP020203 / CcI3)</name>
    <dbReference type="NCBI Taxonomy" id="106370"/>
    <lineage>
        <taxon>Bacteria</taxon>
        <taxon>Bacillati</taxon>
        <taxon>Actinomycetota</taxon>
        <taxon>Actinomycetes</taxon>
        <taxon>Frankiales</taxon>
        <taxon>Frankiaceae</taxon>
        <taxon>Frankia</taxon>
    </lineage>
</organism>
<reference key="1">
    <citation type="journal article" date="2007" name="Genome Res.">
        <title>Genome characteristics of facultatively symbiotic Frankia sp. strains reflect host range and host plant biogeography.</title>
        <authorList>
            <person name="Normand P."/>
            <person name="Lapierre P."/>
            <person name="Tisa L.S."/>
            <person name="Gogarten J.P."/>
            <person name="Alloisio N."/>
            <person name="Bagnarol E."/>
            <person name="Bassi C.A."/>
            <person name="Berry A.M."/>
            <person name="Bickhart D.M."/>
            <person name="Choisne N."/>
            <person name="Couloux A."/>
            <person name="Cournoyer B."/>
            <person name="Cruveiller S."/>
            <person name="Daubin V."/>
            <person name="Demange N."/>
            <person name="Francino M.P."/>
            <person name="Goltsman E."/>
            <person name="Huang Y."/>
            <person name="Kopp O.R."/>
            <person name="Labarre L."/>
            <person name="Lapidus A."/>
            <person name="Lavire C."/>
            <person name="Marechal J."/>
            <person name="Martinez M."/>
            <person name="Mastronunzio J.E."/>
            <person name="Mullin B.C."/>
            <person name="Niemann J."/>
            <person name="Pujic P."/>
            <person name="Rawnsley T."/>
            <person name="Rouy Z."/>
            <person name="Schenowitz C."/>
            <person name="Sellstedt A."/>
            <person name="Tavares F."/>
            <person name="Tomkins J.P."/>
            <person name="Vallenet D."/>
            <person name="Valverde C."/>
            <person name="Wall L.G."/>
            <person name="Wang Y."/>
            <person name="Medigue C."/>
            <person name="Benson D.R."/>
        </authorList>
    </citation>
    <scope>NUCLEOTIDE SEQUENCE [LARGE SCALE GENOMIC DNA]</scope>
    <source>
        <strain>DSM 45818 / CECT 9043 / HFP020203 / CcI3</strain>
    </source>
</reference>
<dbReference type="EC" id="4.3.3.6" evidence="1"/>
<dbReference type="EC" id="3.5.1.2" evidence="1"/>
<dbReference type="EMBL" id="CP000249">
    <property type="protein sequence ID" value="ABD10744.1"/>
    <property type="molecule type" value="Genomic_DNA"/>
</dbReference>
<dbReference type="RefSeq" id="WP_011435809.1">
    <property type="nucleotide sequence ID" value="NZ_JENI01000007.1"/>
</dbReference>
<dbReference type="SMR" id="Q2JD98"/>
<dbReference type="STRING" id="106370.Francci3_1367"/>
<dbReference type="MEROPS" id="C26.A32"/>
<dbReference type="KEGG" id="fra:Francci3_1367"/>
<dbReference type="eggNOG" id="COG0311">
    <property type="taxonomic scope" value="Bacteria"/>
</dbReference>
<dbReference type="HOGENOM" id="CLU_069674_2_0_11"/>
<dbReference type="OrthoDB" id="9810320at2"/>
<dbReference type="PhylomeDB" id="Q2JD98"/>
<dbReference type="UniPathway" id="UPA00245"/>
<dbReference type="Proteomes" id="UP000001937">
    <property type="component" value="Chromosome"/>
</dbReference>
<dbReference type="GO" id="GO:0005829">
    <property type="term" value="C:cytosol"/>
    <property type="evidence" value="ECO:0007669"/>
    <property type="project" value="TreeGrafter"/>
</dbReference>
<dbReference type="GO" id="GO:1903600">
    <property type="term" value="C:glutaminase complex"/>
    <property type="evidence" value="ECO:0007669"/>
    <property type="project" value="TreeGrafter"/>
</dbReference>
<dbReference type="GO" id="GO:0004359">
    <property type="term" value="F:glutaminase activity"/>
    <property type="evidence" value="ECO:0007669"/>
    <property type="project" value="UniProtKB-UniRule"/>
</dbReference>
<dbReference type="GO" id="GO:0036381">
    <property type="term" value="F:pyridoxal 5'-phosphate synthase (glutamine hydrolysing) activity"/>
    <property type="evidence" value="ECO:0007669"/>
    <property type="project" value="UniProtKB-UniRule"/>
</dbReference>
<dbReference type="GO" id="GO:0006543">
    <property type="term" value="P:glutamine catabolic process"/>
    <property type="evidence" value="ECO:0007669"/>
    <property type="project" value="UniProtKB-UniRule"/>
</dbReference>
<dbReference type="GO" id="GO:0042823">
    <property type="term" value="P:pyridoxal phosphate biosynthetic process"/>
    <property type="evidence" value="ECO:0007669"/>
    <property type="project" value="UniProtKB-UniRule"/>
</dbReference>
<dbReference type="GO" id="GO:0008614">
    <property type="term" value="P:pyridoxine metabolic process"/>
    <property type="evidence" value="ECO:0007669"/>
    <property type="project" value="TreeGrafter"/>
</dbReference>
<dbReference type="CDD" id="cd01749">
    <property type="entry name" value="GATase1_PB"/>
    <property type="match status" value="1"/>
</dbReference>
<dbReference type="FunFam" id="3.40.50.880:FF:000010">
    <property type="entry name" value="uncharacterized protein LOC100176842 isoform X2"/>
    <property type="match status" value="1"/>
</dbReference>
<dbReference type="Gene3D" id="3.40.50.880">
    <property type="match status" value="1"/>
</dbReference>
<dbReference type="HAMAP" id="MF_01615">
    <property type="entry name" value="PdxT"/>
    <property type="match status" value="1"/>
</dbReference>
<dbReference type="InterPro" id="IPR029062">
    <property type="entry name" value="Class_I_gatase-like"/>
</dbReference>
<dbReference type="InterPro" id="IPR002161">
    <property type="entry name" value="PdxT/SNO"/>
</dbReference>
<dbReference type="InterPro" id="IPR021196">
    <property type="entry name" value="PdxT/SNO_CS"/>
</dbReference>
<dbReference type="NCBIfam" id="TIGR03800">
    <property type="entry name" value="PLP_synth_Pdx2"/>
    <property type="match status" value="1"/>
</dbReference>
<dbReference type="PANTHER" id="PTHR31559">
    <property type="entry name" value="PYRIDOXAL 5'-PHOSPHATE SYNTHASE SUBUNIT SNO"/>
    <property type="match status" value="1"/>
</dbReference>
<dbReference type="PANTHER" id="PTHR31559:SF0">
    <property type="entry name" value="PYRIDOXAL 5'-PHOSPHATE SYNTHASE SUBUNIT SNO1-RELATED"/>
    <property type="match status" value="1"/>
</dbReference>
<dbReference type="Pfam" id="PF01174">
    <property type="entry name" value="SNO"/>
    <property type="match status" value="1"/>
</dbReference>
<dbReference type="PIRSF" id="PIRSF005639">
    <property type="entry name" value="Glut_amidoT_SNO"/>
    <property type="match status" value="1"/>
</dbReference>
<dbReference type="SUPFAM" id="SSF52317">
    <property type="entry name" value="Class I glutamine amidotransferase-like"/>
    <property type="match status" value="1"/>
</dbReference>
<dbReference type="PROSITE" id="PS01236">
    <property type="entry name" value="PDXT_SNO_1"/>
    <property type="match status" value="1"/>
</dbReference>
<dbReference type="PROSITE" id="PS51130">
    <property type="entry name" value="PDXT_SNO_2"/>
    <property type="match status" value="1"/>
</dbReference>
<proteinExistence type="inferred from homology"/>
<accession>Q2JD98</accession>
<gene>
    <name evidence="1" type="primary">pdxT</name>
    <name type="ordered locus">Francci3_1367</name>
</gene>
<protein>
    <recommendedName>
        <fullName evidence="1">Pyridoxal 5'-phosphate synthase subunit PdxT</fullName>
        <ecNumber evidence="1">4.3.3.6</ecNumber>
    </recommendedName>
    <alternativeName>
        <fullName evidence="1">Pdx2</fullName>
    </alternativeName>
    <alternativeName>
        <fullName evidence="1">Pyridoxal 5'-phosphate synthase glutaminase subunit</fullName>
        <ecNumber evidence="1">3.5.1.2</ecNumber>
    </alternativeName>
</protein>